<reference key="1">
    <citation type="journal article" date="2005" name="Genome Res.">
        <title>Sequence, annotation, and analysis of synteny between rice chromosome 3 and diverged grass species.</title>
        <authorList>
            <consortium name="The rice chromosome 3 sequencing consortium"/>
            <person name="Buell C.R."/>
            <person name="Yuan Q."/>
            <person name="Ouyang S."/>
            <person name="Liu J."/>
            <person name="Zhu W."/>
            <person name="Wang A."/>
            <person name="Maiti R."/>
            <person name="Haas B."/>
            <person name="Wortman J."/>
            <person name="Pertea M."/>
            <person name="Jones K.M."/>
            <person name="Kim M."/>
            <person name="Overton L."/>
            <person name="Tsitrin T."/>
            <person name="Fadrosh D."/>
            <person name="Bera J."/>
            <person name="Weaver B."/>
            <person name="Jin S."/>
            <person name="Johri S."/>
            <person name="Reardon M."/>
            <person name="Webb K."/>
            <person name="Hill J."/>
            <person name="Moffat K."/>
            <person name="Tallon L."/>
            <person name="Van Aken S."/>
            <person name="Lewis M."/>
            <person name="Utterback T."/>
            <person name="Feldblyum T."/>
            <person name="Zismann V."/>
            <person name="Iobst S."/>
            <person name="Hsiao J."/>
            <person name="de Vazeille A.R."/>
            <person name="Salzberg S.L."/>
            <person name="White O."/>
            <person name="Fraser C.M."/>
            <person name="Yu Y."/>
            <person name="Kim H."/>
            <person name="Rambo T."/>
            <person name="Currie J."/>
            <person name="Collura K."/>
            <person name="Kernodle-Thompson S."/>
            <person name="Wei F."/>
            <person name="Kudrna K."/>
            <person name="Ammiraju J.S.S."/>
            <person name="Luo M."/>
            <person name="Goicoechea J.L."/>
            <person name="Wing R.A."/>
            <person name="Henry D."/>
            <person name="Oates R."/>
            <person name="Palmer M."/>
            <person name="Pries G."/>
            <person name="Saski C."/>
            <person name="Simmons J."/>
            <person name="Soderlund C."/>
            <person name="Nelson W."/>
            <person name="de la Bastide M."/>
            <person name="Spiegel L."/>
            <person name="Nascimento L."/>
            <person name="Huang E."/>
            <person name="Preston R."/>
            <person name="Zutavern T."/>
            <person name="Palmer L."/>
            <person name="O'Shaughnessy A."/>
            <person name="Dike S."/>
            <person name="McCombie W.R."/>
            <person name="Minx P."/>
            <person name="Cordum H."/>
            <person name="Wilson R."/>
            <person name="Jin W."/>
            <person name="Lee H.R."/>
            <person name="Jiang J."/>
            <person name="Jackson S."/>
        </authorList>
    </citation>
    <scope>NUCLEOTIDE SEQUENCE [LARGE SCALE GENOMIC DNA]</scope>
    <source>
        <strain>cv. Nipponbare</strain>
    </source>
</reference>
<reference key="2">
    <citation type="journal article" date="2005" name="Nature">
        <title>The map-based sequence of the rice genome.</title>
        <authorList>
            <consortium name="International rice genome sequencing project (IRGSP)"/>
        </authorList>
    </citation>
    <scope>NUCLEOTIDE SEQUENCE [LARGE SCALE GENOMIC DNA]</scope>
    <source>
        <strain>cv. Nipponbare</strain>
    </source>
</reference>
<reference key="3">
    <citation type="journal article" date="2008" name="Nucleic Acids Res.">
        <title>The rice annotation project database (RAP-DB): 2008 update.</title>
        <authorList>
            <consortium name="The rice annotation project (RAP)"/>
        </authorList>
    </citation>
    <scope>GENOME REANNOTATION</scope>
    <source>
        <strain>cv. Nipponbare</strain>
    </source>
</reference>
<reference key="4">
    <citation type="journal article" date="2013" name="Rice">
        <title>Improvement of the Oryza sativa Nipponbare reference genome using next generation sequence and optical map data.</title>
        <authorList>
            <person name="Kawahara Y."/>
            <person name="de la Bastide M."/>
            <person name="Hamilton J.P."/>
            <person name="Kanamori H."/>
            <person name="McCombie W.R."/>
            <person name="Ouyang S."/>
            <person name="Schwartz D.C."/>
            <person name="Tanaka T."/>
            <person name="Wu J."/>
            <person name="Zhou S."/>
            <person name="Childs K.L."/>
            <person name="Davidson R.M."/>
            <person name="Lin H."/>
            <person name="Quesada-Ocampo L."/>
            <person name="Vaillancourt B."/>
            <person name="Sakai H."/>
            <person name="Lee S.S."/>
            <person name="Kim J."/>
            <person name="Numa H."/>
            <person name="Itoh T."/>
            <person name="Buell C.R."/>
            <person name="Matsumoto T."/>
        </authorList>
    </citation>
    <scope>GENOME REANNOTATION</scope>
    <source>
        <strain>cv. Nipponbare</strain>
    </source>
</reference>
<reference key="5">
    <citation type="journal article" date="2005" name="PLoS Biol.">
        <title>The genomes of Oryza sativa: a history of duplications.</title>
        <authorList>
            <person name="Yu J."/>
            <person name="Wang J."/>
            <person name="Lin W."/>
            <person name="Li S."/>
            <person name="Li H."/>
            <person name="Zhou J."/>
            <person name="Ni P."/>
            <person name="Dong W."/>
            <person name="Hu S."/>
            <person name="Zeng C."/>
            <person name="Zhang J."/>
            <person name="Zhang Y."/>
            <person name="Li R."/>
            <person name="Xu Z."/>
            <person name="Li S."/>
            <person name="Li X."/>
            <person name="Zheng H."/>
            <person name="Cong L."/>
            <person name="Lin L."/>
            <person name="Yin J."/>
            <person name="Geng J."/>
            <person name="Li G."/>
            <person name="Shi J."/>
            <person name="Liu J."/>
            <person name="Lv H."/>
            <person name="Li J."/>
            <person name="Wang J."/>
            <person name="Deng Y."/>
            <person name="Ran L."/>
            <person name="Shi X."/>
            <person name="Wang X."/>
            <person name="Wu Q."/>
            <person name="Li C."/>
            <person name="Ren X."/>
            <person name="Wang J."/>
            <person name="Wang X."/>
            <person name="Li D."/>
            <person name="Liu D."/>
            <person name="Zhang X."/>
            <person name="Ji Z."/>
            <person name="Zhao W."/>
            <person name="Sun Y."/>
            <person name="Zhang Z."/>
            <person name="Bao J."/>
            <person name="Han Y."/>
            <person name="Dong L."/>
            <person name="Ji J."/>
            <person name="Chen P."/>
            <person name="Wu S."/>
            <person name="Liu J."/>
            <person name="Xiao Y."/>
            <person name="Bu D."/>
            <person name="Tan J."/>
            <person name="Yang L."/>
            <person name="Ye C."/>
            <person name="Zhang J."/>
            <person name="Xu J."/>
            <person name="Zhou Y."/>
            <person name="Yu Y."/>
            <person name="Zhang B."/>
            <person name="Zhuang S."/>
            <person name="Wei H."/>
            <person name="Liu B."/>
            <person name="Lei M."/>
            <person name="Yu H."/>
            <person name="Li Y."/>
            <person name="Xu H."/>
            <person name="Wei S."/>
            <person name="He X."/>
            <person name="Fang L."/>
            <person name="Zhang Z."/>
            <person name="Zhang Y."/>
            <person name="Huang X."/>
            <person name="Su Z."/>
            <person name="Tong W."/>
            <person name="Li J."/>
            <person name="Tong Z."/>
            <person name="Li S."/>
            <person name="Ye J."/>
            <person name="Wang L."/>
            <person name="Fang L."/>
            <person name="Lei T."/>
            <person name="Chen C.-S."/>
            <person name="Chen H.-C."/>
            <person name="Xu Z."/>
            <person name="Li H."/>
            <person name="Huang H."/>
            <person name="Zhang F."/>
            <person name="Xu H."/>
            <person name="Li N."/>
            <person name="Zhao C."/>
            <person name="Li S."/>
            <person name="Dong L."/>
            <person name="Huang Y."/>
            <person name="Li L."/>
            <person name="Xi Y."/>
            <person name="Qi Q."/>
            <person name="Li W."/>
            <person name="Zhang B."/>
            <person name="Hu W."/>
            <person name="Zhang Y."/>
            <person name="Tian X."/>
            <person name="Jiao Y."/>
            <person name="Liang X."/>
            <person name="Jin J."/>
            <person name="Gao L."/>
            <person name="Zheng W."/>
            <person name="Hao B."/>
            <person name="Liu S.-M."/>
            <person name="Wang W."/>
            <person name="Yuan L."/>
            <person name="Cao M."/>
            <person name="McDermott J."/>
            <person name="Samudrala R."/>
            <person name="Wang J."/>
            <person name="Wong G.K.-S."/>
            <person name="Yang H."/>
        </authorList>
    </citation>
    <scope>NUCLEOTIDE SEQUENCE [LARGE SCALE GENOMIC DNA]</scope>
    <source>
        <strain>cv. Nipponbare</strain>
    </source>
</reference>
<reference key="6">
    <citation type="journal article" date="2003" name="Science">
        <title>Collection, mapping, and annotation of over 28,000 cDNA clones from japonica rice.</title>
        <authorList>
            <consortium name="The rice full-length cDNA consortium"/>
        </authorList>
    </citation>
    <scope>NUCLEOTIDE SEQUENCE [LARGE SCALE MRNA]</scope>
    <source>
        <strain>cv. Nipponbare</strain>
    </source>
</reference>
<sequence length="226" mass="25832">MASEQAAESYTVEELVAVNPYNPDILNDLEGFVNDQVSNQTYNLDANLSLLRLYQFEPERLSVQIVSRILIKALMAMPGPDFSLCLFLIPEHVQMEEQFKTLIVLSHYLETARFRQFWDEASKNRNILDVVPGFEQAIQSYAIHVLSLTYQKVPRPVLAEAINIEGLALDKFLEHHIANSGWVIEKGARSQLIVLPRNEFNHPELKKNTAETVPFEHVTRIFPVLS</sequence>
<organism>
    <name type="scientific">Oryza sativa subsp. japonica</name>
    <name type="common">Rice</name>
    <dbReference type="NCBI Taxonomy" id="39947"/>
    <lineage>
        <taxon>Eukaryota</taxon>
        <taxon>Viridiplantae</taxon>
        <taxon>Streptophyta</taxon>
        <taxon>Embryophyta</taxon>
        <taxon>Tracheophyta</taxon>
        <taxon>Spermatophyta</taxon>
        <taxon>Magnoliopsida</taxon>
        <taxon>Liliopsida</taxon>
        <taxon>Poales</taxon>
        <taxon>Poaceae</taxon>
        <taxon>BOP clade</taxon>
        <taxon>Oryzoideae</taxon>
        <taxon>Oryzeae</taxon>
        <taxon>Oryzinae</taxon>
        <taxon>Oryza</taxon>
        <taxon>Oryza sativa</taxon>
    </lineage>
</organism>
<comment type="function">
    <text evidence="1">Component of the eukaryotic translation initiation factor 3 (eIF-3) complex, which is involved in protein synthesis of a specialized repertoire of mRNAs and, together with other initiation factors, stimulates binding of mRNA and methionyl-tRNAi to the 40S ribosome. The eIF-3 complex specifically targets and initiates translation of a subset of mRNAs involved in cell proliferation.</text>
</comment>
<comment type="subunit">
    <text evidence="1">Component of the eukaryotic translation initiation factor 3 (eIF-3) complex.</text>
</comment>
<comment type="subcellular location">
    <subcellularLocation>
        <location evidence="1">Cytoplasm</location>
    </subcellularLocation>
</comment>
<comment type="similarity">
    <text evidence="1">Belongs to the eIF-3 subunit K family.</text>
</comment>
<name>EIF3K_ORYSJ</name>
<dbReference type="EMBL" id="AC079633">
    <property type="protein sequence ID" value="AAK92637.1"/>
    <property type="molecule type" value="Genomic_DNA"/>
</dbReference>
<dbReference type="EMBL" id="DP000009">
    <property type="protein sequence ID" value="ABF94327.1"/>
    <property type="molecule type" value="Genomic_DNA"/>
</dbReference>
<dbReference type="EMBL" id="AP008209">
    <property type="protein sequence ID" value="BAF11089.2"/>
    <property type="molecule type" value="Genomic_DNA"/>
</dbReference>
<dbReference type="EMBL" id="AP014959">
    <property type="protein sequence ID" value="BAS82640.1"/>
    <property type="molecule type" value="Genomic_DNA"/>
</dbReference>
<dbReference type="EMBL" id="CM000140">
    <property type="protein sequence ID" value="EEE58443.1"/>
    <property type="molecule type" value="Genomic_DNA"/>
</dbReference>
<dbReference type="EMBL" id="AK073293">
    <property type="protein sequence ID" value="BAG93382.1"/>
    <property type="molecule type" value="mRNA"/>
</dbReference>
<dbReference type="RefSeq" id="XP_015632276.1">
    <property type="nucleotide sequence ID" value="XM_015776790.1"/>
</dbReference>
<dbReference type="SMR" id="Q94HF1"/>
<dbReference type="FunCoup" id="Q94HF1">
    <property type="interactions" value="2946"/>
</dbReference>
<dbReference type="STRING" id="39947.Q94HF1"/>
<dbReference type="PaxDb" id="39947-Q94HF1"/>
<dbReference type="EnsemblPlants" id="Os03t0182700-02">
    <property type="protein sequence ID" value="Os03t0182700-02"/>
    <property type="gene ID" value="Os03g0182700"/>
</dbReference>
<dbReference type="Gramene" id="Os03t0182700-02">
    <property type="protein sequence ID" value="Os03t0182700-02"/>
    <property type="gene ID" value="Os03g0182700"/>
</dbReference>
<dbReference type="KEGG" id="dosa:Os03g0182700"/>
<dbReference type="eggNOG" id="KOG3252">
    <property type="taxonomic scope" value="Eukaryota"/>
</dbReference>
<dbReference type="HOGENOM" id="CLU_076723_2_0_1"/>
<dbReference type="InParanoid" id="Q94HF1"/>
<dbReference type="OMA" id="GDDLCAD"/>
<dbReference type="OrthoDB" id="337745at2759"/>
<dbReference type="Proteomes" id="UP000000763">
    <property type="component" value="Chromosome 3"/>
</dbReference>
<dbReference type="Proteomes" id="UP000007752">
    <property type="component" value="Chromosome 3"/>
</dbReference>
<dbReference type="Proteomes" id="UP000059680">
    <property type="component" value="Chromosome 3"/>
</dbReference>
<dbReference type="GO" id="GO:0016282">
    <property type="term" value="C:eukaryotic 43S preinitiation complex"/>
    <property type="evidence" value="ECO:0007669"/>
    <property type="project" value="UniProtKB-UniRule"/>
</dbReference>
<dbReference type="GO" id="GO:0033290">
    <property type="term" value="C:eukaryotic 48S preinitiation complex"/>
    <property type="evidence" value="ECO:0007669"/>
    <property type="project" value="UniProtKB-UniRule"/>
</dbReference>
<dbReference type="GO" id="GO:0005852">
    <property type="term" value="C:eukaryotic translation initiation factor 3 complex"/>
    <property type="evidence" value="ECO:0000318"/>
    <property type="project" value="GO_Central"/>
</dbReference>
<dbReference type="GO" id="GO:0043022">
    <property type="term" value="F:ribosome binding"/>
    <property type="evidence" value="ECO:0007669"/>
    <property type="project" value="InterPro"/>
</dbReference>
<dbReference type="GO" id="GO:0003723">
    <property type="term" value="F:RNA binding"/>
    <property type="evidence" value="ECO:0007669"/>
    <property type="project" value="UniProtKB-UniRule"/>
</dbReference>
<dbReference type="GO" id="GO:0003743">
    <property type="term" value="F:translation initiation factor activity"/>
    <property type="evidence" value="ECO:0007669"/>
    <property type="project" value="UniProtKB-UniRule"/>
</dbReference>
<dbReference type="GO" id="GO:0001732">
    <property type="term" value="P:formation of cytoplasmic translation initiation complex"/>
    <property type="evidence" value="ECO:0007669"/>
    <property type="project" value="UniProtKB-UniRule"/>
</dbReference>
<dbReference type="GO" id="GO:0006446">
    <property type="term" value="P:regulation of translational initiation"/>
    <property type="evidence" value="ECO:0007669"/>
    <property type="project" value="InterPro"/>
</dbReference>
<dbReference type="FunFam" id="1.10.10.10:FF:000378">
    <property type="entry name" value="Eukaryotic translation initiation factor 3 subunit K"/>
    <property type="match status" value="1"/>
</dbReference>
<dbReference type="FunFam" id="1.25.40.250:FF:000002">
    <property type="entry name" value="Eukaryotic translation initiation factor 3 subunit K"/>
    <property type="match status" value="1"/>
</dbReference>
<dbReference type="Gene3D" id="1.25.40.250">
    <property type="entry name" value="ARM repeat, domain 1"/>
    <property type="match status" value="1"/>
</dbReference>
<dbReference type="Gene3D" id="1.10.10.10">
    <property type="entry name" value="Winged helix-like DNA-binding domain superfamily/Winged helix DNA-binding domain"/>
    <property type="match status" value="1"/>
</dbReference>
<dbReference type="HAMAP" id="MF_03010">
    <property type="entry name" value="eIF3k"/>
    <property type="match status" value="1"/>
</dbReference>
<dbReference type="InterPro" id="IPR016024">
    <property type="entry name" value="ARM-type_fold"/>
</dbReference>
<dbReference type="InterPro" id="IPR033464">
    <property type="entry name" value="CSN8_PSD8_EIF3K"/>
</dbReference>
<dbReference type="InterPro" id="IPR009374">
    <property type="entry name" value="eIF3k"/>
</dbReference>
<dbReference type="InterPro" id="IPR000717">
    <property type="entry name" value="PCI_dom"/>
</dbReference>
<dbReference type="InterPro" id="IPR016020">
    <property type="entry name" value="Transl_init_fac_sub12_N_euk"/>
</dbReference>
<dbReference type="InterPro" id="IPR036388">
    <property type="entry name" value="WH-like_DNA-bd_sf"/>
</dbReference>
<dbReference type="InterPro" id="IPR036390">
    <property type="entry name" value="WH_DNA-bd_sf"/>
</dbReference>
<dbReference type="PANTHER" id="PTHR13022">
    <property type="entry name" value="EUKARYOTIC TRANSLATION INITIATION FACTOR 3 SUBUNIT 11"/>
    <property type="match status" value="1"/>
</dbReference>
<dbReference type="PANTHER" id="PTHR13022:SF0">
    <property type="entry name" value="EUKARYOTIC TRANSLATION INITIATION FACTOR 3 SUBUNIT K"/>
    <property type="match status" value="1"/>
</dbReference>
<dbReference type="Pfam" id="PF10075">
    <property type="entry name" value="CSN8_PSD8_EIF3K"/>
    <property type="match status" value="1"/>
</dbReference>
<dbReference type="SUPFAM" id="SSF48371">
    <property type="entry name" value="ARM repeat"/>
    <property type="match status" value="1"/>
</dbReference>
<dbReference type="SUPFAM" id="SSF46785">
    <property type="entry name" value="Winged helix' DNA-binding domain"/>
    <property type="match status" value="1"/>
</dbReference>
<dbReference type="PROSITE" id="PS50250">
    <property type="entry name" value="PCI"/>
    <property type="match status" value="1"/>
</dbReference>
<gene>
    <name type="primary">TIF3K1</name>
    <name type="ordered locus">Os03g0182700</name>
    <name type="ordered locus">LOC_Os03g08450</name>
    <name evidence="3" type="ORF">OsJ_09669</name>
    <name type="ORF">OSJNBa0032G08.17</name>
</gene>
<evidence type="ECO:0000255" key="1">
    <source>
        <dbReference type="HAMAP-Rule" id="MF_03010"/>
    </source>
</evidence>
<evidence type="ECO:0000255" key="2">
    <source>
        <dbReference type="PROSITE-ProRule" id="PRU01185"/>
    </source>
</evidence>
<evidence type="ECO:0000312" key="3">
    <source>
        <dbReference type="EMBL" id="EEE58443.1"/>
    </source>
</evidence>
<accession>Q94HF1</accession>
<accession>Q0DUJ9</accession>
<accession>Q10QU7</accession>
<feature type="chain" id="PRO_0000123552" description="Eukaryotic translation initiation factor 3 subunit K">
    <location>
        <begin position="1"/>
        <end position="226"/>
    </location>
</feature>
<feature type="domain" description="PCI" evidence="2">
    <location>
        <begin position="42"/>
        <end position="200"/>
    </location>
</feature>
<keyword id="KW-0963">Cytoplasm</keyword>
<keyword id="KW-0396">Initiation factor</keyword>
<keyword id="KW-0648">Protein biosynthesis</keyword>
<keyword id="KW-1185">Reference proteome</keyword>
<protein>
    <recommendedName>
        <fullName evidence="1">Eukaryotic translation initiation factor 3 subunit K</fullName>
        <shortName evidence="1">eIF3k</shortName>
    </recommendedName>
    <alternativeName>
        <fullName evidence="1">eIF-3 p25</fullName>
    </alternativeName>
</protein>
<proteinExistence type="evidence at transcript level"/>